<gene>
    <name type="primary">dnajc11</name>
    <name type="ORF">DDB_G0284263</name>
</gene>
<sequence>MNKIDKDILKIFESKENEQFDEDQEKDEKKMNEVDFYSILNISRNATDDEIKIAFKKLAFTYHPDKQTNEELKKETQDIFTLITLAKDTLSDPKLRAIYDQFGLEGIEHSKAIVNKYKEVDKLLQALDRIQKENEEDKLIQSFSATGSQSISLAYHHEYRHFFFKTLKSEAQFDIKTQKYGSFEFVPSITRKKNLAWFGLETSYLYPITQNTELFLSNNYNEANEGSIQTIGLKSLLSANTYGSIHCAFFDSFQPARFGCLLTRQLSPTITAIFRGTLQKEFWQGSLTLKRIVQKRLFEITIDSSNLGGLSGSITRDIPISKKSRISFSVGGYGGGFPLYSAGQHGFTGAAIGFKRKITKVFDIDLSMHVNPSRYLYVIGLHHRYQSLEIPIPIYSDLSLSTSLLFFTLPAVTLSLLKYLVVKPLMKKKEQKKIMEKKEKYADQARKAKRKAEMDITLVKQLVENKVLKEKTKNGLIIQEAVYGKLDEKVDHSDPFSVEFPPTIDVTIPLQYLVEDSKLVLHGNNKKSDLLGFWDPRISEEKQLKVTYFFQNRLHRITVNDIDQLLIPLKSHLIQ</sequence>
<accession>Q54PV9</accession>
<proteinExistence type="inferred from homology"/>
<name>DJC11_DICDI</name>
<feature type="chain" id="PRO_0000328420" description="DnaJ homolog subfamily C member 11 homolog">
    <location>
        <begin position="1"/>
        <end position="575"/>
    </location>
</feature>
<feature type="domain" description="J" evidence="2">
    <location>
        <begin position="35"/>
        <end position="103"/>
    </location>
</feature>
<feature type="coiled-coil region" evidence="1">
    <location>
        <begin position="427"/>
        <end position="456"/>
    </location>
</feature>
<protein>
    <recommendedName>
        <fullName>DnaJ homolog subfamily C member 11 homolog</fullName>
    </recommendedName>
</protein>
<comment type="similarity">
    <text evidence="3">Belongs to the DNAJC11 family.</text>
</comment>
<evidence type="ECO:0000255" key="1"/>
<evidence type="ECO:0000255" key="2">
    <source>
        <dbReference type="PROSITE-ProRule" id="PRU00286"/>
    </source>
</evidence>
<evidence type="ECO:0000305" key="3"/>
<reference key="1">
    <citation type="journal article" date="2005" name="Nature">
        <title>The genome of the social amoeba Dictyostelium discoideum.</title>
        <authorList>
            <person name="Eichinger L."/>
            <person name="Pachebat J.A."/>
            <person name="Gloeckner G."/>
            <person name="Rajandream M.A."/>
            <person name="Sucgang R."/>
            <person name="Berriman M."/>
            <person name="Song J."/>
            <person name="Olsen R."/>
            <person name="Szafranski K."/>
            <person name="Xu Q."/>
            <person name="Tunggal B."/>
            <person name="Kummerfeld S."/>
            <person name="Madera M."/>
            <person name="Konfortov B.A."/>
            <person name="Rivero F."/>
            <person name="Bankier A.T."/>
            <person name="Lehmann R."/>
            <person name="Hamlin N."/>
            <person name="Davies R."/>
            <person name="Gaudet P."/>
            <person name="Fey P."/>
            <person name="Pilcher K."/>
            <person name="Chen G."/>
            <person name="Saunders D."/>
            <person name="Sodergren E.J."/>
            <person name="Davis P."/>
            <person name="Kerhornou A."/>
            <person name="Nie X."/>
            <person name="Hall N."/>
            <person name="Anjard C."/>
            <person name="Hemphill L."/>
            <person name="Bason N."/>
            <person name="Farbrother P."/>
            <person name="Desany B."/>
            <person name="Just E."/>
            <person name="Morio T."/>
            <person name="Rost R."/>
            <person name="Churcher C.M."/>
            <person name="Cooper J."/>
            <person name="Haydock S."/>
            <person name="van Driessche N."/>
            <person name="Cronin A."/>
            <person name="Goodhead I."/>
            <person name="Muzny D.M."/>
            <person name="Mourier T."/>
            <person name="Pain A."/>
            <person name="Lu M."/>
            <person name="Harper D."/>
            <person name="Lindsay R."/>
            <person name="Hauser H."/>
            <person name="James K.D."/>
            <person name="Quiles M."/>
            <person name="Madan Babu M."/>
            <person name="Saito T."/>
            <person name="Buchrieser C."/>
            <person name="Wardroper A."/>
            <person name="Felder M."/>
            <person name="Thangavelu M."/>
            <person name="Johnson D."/>
            <person name="Knights A."/>
            <person name="Loulseged H."/>
            <person name="Mungall K.L."/>
            <person name="Oliver K."/>
            <person name="Price C."/>
            <person name="Quail M.A."/>
            <person name="Urushihara H."/>
            <person name="Hernandez J."/>
            <person name="Rabbinowitsch E."/>
            <person name="Steffen D."/>
            <person name="Sanders M."/>
            <person name="Ma J."/>
            <person name="Kohara Y."/>
            <person name="Sharp S."/>
            <person name="Simmonds M.N."/>
            <person name="Spiegler S."/>
            <person name="Tivey A."/>
            <person name="Sugano S."/>
            <person name="White B."/>
            <person name="Walker D."/>
            <person name="Woodward J.R."/>
            <person name="Winckler T."/>
            <person name="Tanaka Y."/>
            <person name="Shaulsky G."/>
            <person name="Schleicher M."/>
            <person name="Weinstock G.M."/>
            <person name="Rosenthal A."/>
            <person name="Cox E.C."/>
            <person name="Chisholm R.L."/>
            <person name="Gibbs R.A."/>
            <person name="Loomis W.F."/>
            <person name="Platzer M."/>
            <person name="Kay R.R."/>
            <person name="Williams J.G."/>
            <person name="Dear P.H."/>
            <person name="Noegel A.A."/>
            <person name="Barrell B.G."/>
            <person name="Kuspa A."/>
        </authorList>
    </citation>
    <scope>NUCLEOTIDE SEQUENCE [LARGE SCALE GENOMIC DNA]</scope>
    <source>
        <strain>AX4</strain>
    </source>
</reference>
<organism>
    <name type="scientific">Dictyostelium discoideum</name>
    <name type="common">Social amoeba</name>
    <dbReference type="NCBI Taxonomy" id="44689"/>
    <lineage>
        <taxon>Eukaryota</taxon>
        <taxon>Amoebozoa</taxon>
        <taxon>Evosea</taxon>
        <taxon>Eumycetozoa</taxon>
        <taxon>Dictyostelia</taxon>
        <taxon>Dictyosteliales</taxon>
        <taxon>Dictyosteliaceae</taxon>
        <taxon>Dictyostelium</taxon>
    </lineage>
</organism>
<dbReference type="EMBL" id="AAFI02000064">
    <property type="protein sequence ID" value="EAL65320.1"/>
    <property type="molecule type" value="Genomic_DNA"/>
</dbReference>
<dbReference type="RefSeq" id="XP_638686.1">
    <property type="nucleotide sequence ID" value="XM_633594.1"/>
</dbReference>
<dbReference type="SMR" id="Q54PV9"/>
<dbReference type="FunCoup" id="Q54PV9">
    <property type="interactions" value="135"/>
</dbReference>
<dbReference type="STRING" id="44689.Q54PV9"/>
<dbReference type="PaxDb" id="44689-DDB0233790"/>
<dbReference type="EnsemblProtists" id="EAL65320">
    <property type="protein sequence ID" value="EAL65320"/>
    <property type="gene ID" value="DDB_G0284263"/>
</dbReference>
<dbReference type="GeneID" id="8624516"/>
<dbReference type="KEGG" id="ddi:DDB_G0284263"/>
<dbReference type="dictyBase" id="DDB_G0284263"/>
<dbReference type="VEuPathDB" id="AmoebaDB:DDB_G0284263"/>
<dbReference type="eggNOG" id="KOG0718">
    <property type="taxonomic scope" value="Eukaryota"/>
</dbReference>
<dbReference type="HOGENOM" id="CLU_019611_2_0_1"/>
<dbReference type="InParanoid" id="Q54PV9"/>
<dbReference type="OMA" id="QLDKHTM"/>
<dbReference type="PhylomeDB" id="Q54PV9"/>
<dbReference type="PRO" id="PR:Q54PV9"/>
<dbReference type="Proteomes" id="UP000002195">
    <property type="component" value="Chromosome 4"/>
</dbReference>
<dbReference type="GO" id="GO:0005739">
    <property type="term" value="C:mitochondrion"/>
    <property type="evidence" value="ECO:0007669"/>
    <property type="project" value="GOC"/>
</dbReference>
<dbReference type="GO" id="GO:0042407">
    <property type="term" value="P:cristae formation"/>
    <property type="evidence" value="ECO:0000318"/>
    <property type="project" value="GO_Central"/>
</dbReference>
<dbReference type="CDD" id="cd06257">
    <property type="entry name" value="DnaJ"/>
    <property type="match status" value="1"/>
</dbReference>
<dbReference type="Gene3D" id="1.10.287.110">
    <property type="entry name" value="DnaJ domain"/>
    <property type="match status" value="1"/>
</dbReference>
<dbReference type="InterPro" id="IPR024586">
    <property type="entry name" value="DnaJ-like_C11_C"/>
</dbReference>
<dbReference type="InterPro" id="IPR001623">
    <property type="entry name" value="DnaJ_domain"/>
</dbReference>
<dbReference type="InterPro" id="IPR036869">
    <property type="entry name" value="J_dom_sf"/>
</dbReference>
<dbReference type="InterPro" id="IPR052243">
    <property type="entry name" value="Mito_inner_membrane_organizer"/>
</dbReference>
<dbReference type="PANTHER" id="PTHR44157">
    <property type="entry name" value="DNAJ HOMOLOG SUBFAMILY C MEMBER 11"/>
    <property type="match status" value="1"/>
</dbReference>
<dbReference type="PANTHER" id="PTHR44157:SF1">
    <property type="entry name" value="DNAJ HOMOLOG SUBFAMILY C MEMBER 11"/>
    <property type="match status" value="1"/>
</dbReference>
<dbReference type="Pfam" id="PF00226">
    <property type="entry name" value="DnaJ"/>
    <property type="match status" value="1"/>
</dbReference>
<dbReference type="Pfam" id="PF11875">
    <property type="entry name" value="DnaJ-like_C11_C"/>
    <property type="match status" value="1"/>
</dbReference>
<dbReference type="PRINTS" id="PR00625">
    <property type="entry name" value="JDOMAIN"/>
</dbReference>
<dbReference type="SMART" id="SM00271">
    <property type="entry name" value="DnaJ"/>
    <property type="match status" value="1"/>
</dbReference>
<dbReference type="SUPFAM" id="SSF46565">
    <property type="entry name" value="Chaperone J-domain"/>
    <property type="match status" value="1"/>
</dbReference>
<dbReference type="PROSITE" id="PS50076">
    <property type="entry name" value="DNAJ_2"/>
    <property type="match status" value="1"/>
</dbReference>
<keyword id="KW-0143">Chaperone</keyword>
<keyword id="KW-0175">Coiled coil</keyword>
<keyword id="KW-1185">Reference proteome</keyword>